<name>AIM21_CANAL</name>
<keyword id="KW-0963">Cytoplasm</keyword>
<keyword id="KW-0206">Cytoskeleton</keyword>
<keyword id="KW-1185">Reference proteome</keyword>
<dbReference type="EMBL" id="CP017623">
    <property type="protein sequence ID" value="AOW26640.1"/>
    <property type="molecule type" value="Genomic_DNA"/>
</dbReference>
<dbReference type="RefSeq" id="XP_723562.2">
    <property type="nucleotide sequence ID" value="XM_718469.2"/>
</dbReference>
<dbReference type="FunCoup" id="Q5AP87">
    <property type="interactions" value="124"/>
</dbReference>
<dbReference type="STRING" id="237561.Q5AP87"/>
<dbReference type="EnsemblFungi" id="C1_10090C_A-T">
    <property type="protein sequence ID" value="C1_10090C_A-T-p1"/>
    <property type="gene ID" value="C1_10090C_A"/>
</dbReference>
<dbReference type="GeneID" id="3634817"/>
<dbReference type="KEGG" id="cal:CAALFM_C110090CA"/>
<dbReference type="CGD" id="CAL0000178029">
    <property type="gene designation" value="orf19.12342"/>
</dbReference>
<dbReference type="VEuPathDB" id="FungiDB:C1_10090C_A"/>
<dbReference type="eggNOG" id="ENOG502S25J">
    <property type="taxonomic scope" value="Eukaryota"/>
</dbReference>
<dbReference type="HOGENOM" id="CLU_336152_0_0_1"/>
<dbReference type="InParanoid" id="Q5AP87"/>
<dbReference type="OrthoDB" id="4096963at2759"/>
<dbReference type="PRO" id="PR:Q5AP87"/>
<dbReference type="Proteomes" id="UP000000559">
    <property type="component" value="Chromosome 1"/>
</dbReference>
<dbReference type="GO" id="GO:0030479">
    <property type="term" value="C:actin cortical patch"/>
    <property type="evidence" value="ECO:0007669"/>
    <property type="project" value="UniProtKB-SubCell"/>
</dbReference>
<proteinExistence type="inferred from homology"/>
<gene>
    <name type="primary">AIM21</name>
    <name type="ordered locus">CAALFM_C110090CA</name>
    <name type="ORF">CaO19.12342</name>
    <name type="ORF">CaO19.4878</name>
</gene>
<comment type="function">
    <text evidence="1">Involved in mitochondrial migration along actin filaments.</text>
</comment>
<comment type="subcellular location">
    <subcellularLocation>
        <location evidence="1">Cytoplasm</location>
        <location evidence="1">Cytoskeleton</location>
        <location evidence="1">Actin patch</location>
    </subcellularLocation>
    <text evidence="1">Cortical actin patches.</text>
</comment>
<comment type="similarity">
    <text evidence="3">Belongs to the AIM21 family.</text>
</comment>
<organism>
    <name type="scientific">Candida albicans (strain SC5314 / ATCC MYA-2876)</name>
    <name type="common">Yeast</name>
    <dbReference type="NCBI Taxonomy" id="237561"/>
    <lineage>
        <taxon>Eukaryota</taxon>
        <taxon>Fungi</taxon>
        <taxon>Dikarya</taxon>
        <taxon>Ascomycota</taxon>
        <taxon>Saccharomycotina</taxon>
        <taxon>Pichiomycetes</taxon>
        <taxon>Debaryomycetaceae</taxon>
        <taxon>Candida/Lodderomyces clade</taxon>
        <taxon>Candida</taxon>
    </lineage>
</organism>
<protein>
    <recommendedName>
        <fullName>Altered inheritance of mitochondria protein 21</fullName>
    </recommendedName>
</protein>
<accession>Q5AP87</accession>
<accession>A0A1D8PEW4</accession>
<evidence type="ECO:0000250" key="1"/>
<evidence type="ECO:0000256" key="2">
    <source>
        <dbReference type="SAM" id="MobiDB-lite"/>
    </source>
</evidence>
<evidence type="ECO:0000305" key="3"/>
<sequence length="848" mass="93190">MPDSEPLEPLNQESSSNTEQLKLSTTPNIPARPQTRPQKQSTTTTTTVPTDQDSTTETSLEKPLDNPQDELDELAHEIEKVLSDPVIPPRPQHGSSTKSSETQTEHKEHDFEPAHPAIPQRPTNKKETIQSEVGDHNNGLESKSDLKVNKETSDDSVSTDKDKVHIKPSIPTIPSRPQSRNLDFSEVDNTKPSTTPSIPARPQRQSTTTQDEYKPQASNTPDIVTRPQTKTEKSVSNEELDKPGDEPSSKDQDNERHTDDSNASKSILETEKAVAQEEKKAKKSDVDNKPSEPTTSTDSSTEPTAPARGFRLPLHMQQGSGPISTSTPVAGSEAELNSLNNSNTFGDGEVTPGNSDTKATFKNDEDVENENRTDSSSFDDDMETISQDNEDGEQDRRNRQETATEENAQESEAPQFETTIIESGETEERDGDDTDSGELYSEQQQNKEKEETVPATSTPKIPQRPPKKSSLSRATTNDSLTSLNSTSKPPKPVISKRPTTEESLSNIEPTIPSRPAINQIPSVGESQHEPIVPNRPGNKDLASSQKDTQVSVKSKPPPPKPKKLSSKIAAFQQQLFNPANASSEEDVSSTGSKQPESGIRKRSTENSVLSRFGGKAIPLPGMFNPNQMPKPSISHGEETSDDKEEKQESATANAPVRRTRGPRGKKLPKAVADAEVKTESRFAIESGKLWSIEFKKKIVEEKEIISTSVEDLKKPKILSENDEAGDESKETAVENEVIDNPEIPVKDELQHDVVDVVGHPEKDVVTGLDDDDEDVPPEVNERFIKDEEISNVGVERTIASETTTEKHSTDEEEVEEEAEVDSVDIPIRRVAVNTVDSTEVQKDVEDEP</sequence>
<feature type="chain" id="PRO_0000399514" description="Altered inheritance of mitochondria protein 21">
    <location>
        <begin position="1"/>
        <end position="848"/>
    </location>
</feature>
<feature type="region of interest" description="Disordered" evidence="2">
    <location>
        <begin position="1"/>
        <end position="676"/>
    </location>
</feature>
<feature type="region of interest" description="Disordered" evidence="2">
    <location>
        <begin position="717"/>
        <end position="740"/>
    </location>
</feature>
<feature type="region of interest" description="Disordered" evidence="2">
    <location>
        <begin position="798"/>
        <end position="822"/>
    </location>
</feature>
<feature type="compositionally biased region" description="Polar residues" evidence="2">
    <location>
        <begin position="11"/>
        <end position="28"/>
    </location>
</feature>
<feature type="compositionally biased region" description="Low complexity" evidence="2">
    <location>
        <begin position="34"/>
        <end position="58"/>
    </location>
</feature>
<feature type="compositionally biased region" description="Basic and acidic residues" evidence="2">
    <location>
        <begin position="73"/>
        <end position="82"/>
    </location>
</feature>
<feature type="compositionally biased region" description="Polar residues" evidence="2">
    <location>
        <begin position="93"/>
        <end position="102"/>
    </location>
</feature>
<feature type="compositionally biased region" description="Basic and acidic residues" evidence="2">
    <location>
        <begin position="103"/>
        <end position="113"/>
    </location>
</feature>
<feature type="compositionally biased region" description="Basic and acidic residues" evidence="2">
    <location>
        <begin position="124"/>
        <end position="135"/>
    </location>
</feature>
<feature type="compositionally biased region" description="Basic and acidic residues" evidence="2">
    <location>
        <begin position="142"/>
        <end position="165"/>
    </location>
</feature>
<feature type="compositionally biased region" description="Polar residues" evidence="2">
    <location>
        <begin position="190"/>
        <end position="228"/>
    </location>
</feature>
<feature type="compositionally biased region" description="Basic and acidic residues" evidence="2">
    <location>
        <begin position="229"/>
        <end position="290"/>
    </location>
</feature>
<feature type="compositionally biased region" description="Low complexity" evidence="2">
    <location>
        <begin position="291"/>
        <end position="307"/>
    </location>
</feature>
<feature type="compositionally biased region" description="Polar residues" evidence="2">
    <location>
        <begin position="317"/>
        <end position="329"/>
    </location>
</feature>
<feature type="compositionally biased region" description="Basic and acidic residues" evidence="2">
    <location>
        <begin position="359"/>
        <end position="373"/>
    </location>
</feature>
<feature type="compositionally biased region" description="Acidic residues" evidence="2">
    <location>
        <begin position="377"/>
        <end position="393"/>
    </location>
</feature>
<feature type="compositionally biased region" description="Acidic residues" evidence="2">
    <location>
        <begin position="424"/>
        <end position="436"/>
    </location>
</feature>
<feature type="compositionally biased region" description="Low complexity" evidence="2">
    <location>
        <begin position="475"/>
        <end position="487"/>
    </location>
</feature>
<feature type="compositionally biased region" description="Polar residues" evidence="2">
    <location>
        <begin position="541"/>
        <end position="552"/>
    </location>
</feature>
<feature type="compositionally biased region" description="Polar residues" evidence="2">
    <location>
        <begin position="571"/>
        <end position="595"/>
    </location>
</feature>
<feature type="compositionally biased region" description="Basic and acidic residues" evidence="2">
    <location>
        <begin position="635"/>
        <end position="648"/>
    </location>
</feature>
<feature type="compositionally biased region" description="Basic residues" evidence="2">
    <location>
        <begin position="657"/>
        <end position="668"/>
    </location>
</feature>
<feature type="compositionally biased region" description="Acidic residues" evidence="2">
    <location>
        <begin position="810"/>
        <end position="822"/>
    </location>
</feature>
<reference key="1">
    <citation type="journal article" date="2004" name="Proc. Natl. Acad. Sci. U.S.A.">
        <title>The diploid genome sequence of Candida albicans.</title>
        <authorList>
            <person name="Jones T."/>
            <person name="Federspiel N.A."/>
            <person name="Chibana H."/>
            <person name="Dungan J."/>
            <person name="Kalman S."/>
            <person name="Magee B.B."/>
            <person name="Newport G."/>
            <person name="Thorstenson Y.R."/>
            <person name="Agabian N."/>
            <person name="Magee P.T."/>
            <person name="Davis R.W."/>
            <person name="Scherer S."/>
        </authorList>
    </citation>
    <scope>NUCLEOTIDE SEQUENCE [LARGE SCALE GENOMIC DNA]</scope>
    <source>
        <strain>SC5314 / ATCC MYA-2876</strain>
    </source>
</reference>
<reference key="2">
    <citation type="journal article" date="2007" name="Genome Biol.">
        <title>Assembly of the Candida albicans genome into sixteen supercontigs aligned on the eight chromosomes.</title>
        <authorList>
            <person name="van het Hoog M."/>
            <person name="Rast T.J."/>
            <person name="Martchenko M."/>
            <person name="Grindle S."/>
            <person name="Dignard D."/>
            <person name="Hogues H."/>
            <person name="Cuomo C."/>
            <person name="Berriman M."/>
            <person name="Scherer S."/>
            <person name="Magee B.B."/>
            <person name="Whiteway M."/>
            <person name="Chibana H."/>
            <person name="Nantel A."/>
            <person name="Magee P.T."/>
        </authorList>
    </citation>
    <scope>GENOME REANNOTATION</scope>
    <source>
        <strain>SC5314 / ATCC MYA-2876</strain>
    </source>
</reference>
<reference key="3">
    <citation type="journal article" date="2013" name="Genome Biol.">
        <title>Assembly of a phased diploid Candida albicans genome facilitates allele-specific measurements and provides a simple model for repeat and indel structure.</title>
        <authorList>
            <person name="Muzzey D."/>
            <person name="Schwartz K."/>
            <person name="Weissman J.S."/>
            <person name="Sherlock G."/>
        </authorList>
    </citation>
    <scope>NUCLEOTIDE SEQUENCE [LARGE SCALE GENOMIC DNA]</scope>
    <scope>GENOME REANNOTATION</scope>
    <source>
        <strain>SC5314 / ATCC MYA-2876</strain>
    </source>
</reference>